<protein>
    <recommendedName>
        <fullName>Dynein, cytoplasmic 1, intermediate chain 2a</fullName>
    </recommendedName>
</protein>
<feature type="initiator methionine" description="Removed" evidence="2">
    <location>
        <position position="1"/>
    </location>
</feature>
<feature type="chain" id="PRO_0000448836" description="Dynein, cytoplasmic 1, intermediate chain 2a">
    <location>
        <begin position="2"/>
        <end position="626"/>
    </location>
</feature>
<feature type="repeat" description="WD 1" evidence="3">
    <location>
        <begin position="265"/>
        <end position="314"/>
    </location>
</feature>
<feature type="repeat" description="WD 2" evidence="3">
    <location>
        <begin position="318"/>
        <end position="358"/>
    </location>
</feature>
<feature type="repeat" description="WD 3" evidence="3">
    <location>
        <begin position="367"/>
        <end position="408"/>
    </location>
</feature>
<feature type="repeat" description="WD 4" evidence="3">
    <location>
        <begin position="417"/>
        <end position="457"/>
    </location>
</feature>
<feature type="repeat" description="WD 5" evidence="3">
    <location>
        <begin position="462"/>
        <end position="507"/>
    </location>
</feature>
<feature type="repeat" description="WD 6" evidence="3">
    <location>
        <begin position="510"/>
        <end position="550"/>
    </location>
</feature>
<feature type="repeat" description="WD 7" evidence="3">
    <location>
        <begin position="556"/>
        <end position="595"/>
    </location>
</feature>
<feature type="region of interest" description="Disordered" evidence="4">
    <location>
        <begin position="20"/>
        <end position="108"/>
    </location>
</feature>
<feature type="region of interest" description="Disordered" evidence="4">
    <location>
        <begin position="142"/>
        <end position="197"/>
    </location>
</feature>
<feature type="compositionally biased region" description="Basic and acidic residues" evidence="4">
    <location>
        <begin position="20"/>
        <end position="43"/>
    </location>
</feature>
<feature type="compositionally biased region" description="Polar residues" evidence="4">
    <location>
        <begin position="82"/>
        <end position="99"/>
    </location>
</feature>
<feature type="compositionally biased region" description="Acidic residues" evidence="4">
    <location>
        <begin position="160"/>
        <end position="169"/>
    </location>
</feature>
<feature type="compositionally biased region" description="Basic and acidic residues" evidence="4">
    <location>
        <begin position="177"/>
        <end position="197"/>
    </location>
</feature>
<evidence type="ECO:0000250" key="1">
    <source>
        <dbReference type="UniProtKB" id="O88487"/>
    </source>
</evidence>
<evidence type="ECO:0000250" key="2">
    <source>
        <dbReference type="UniProtKB" id="Q13409"/>
    </source>
</evidence>
<evidence type="ECO:0000255" key="3"/>
<evidence type="ECO:0000256" key="4">
    <source>
        <dbReference type="SAM" id="MobiDB-lite"/>
    </source>
</evidence>
<evidence type="ECO:0000269" key="5">
    <source>
    </source>
</evidence>
<evidence type="ECO:0000305" key="6"/>
<keyword id="KW-0963">Cytoplasm</keyword>
<keyword id="KW-0206">Cytoskeleton</keyword>
<keyword id="KW-1185">Reference proteome</keyword>
<keyword id="KW-0677">Repeat</keyword>
<keyword id="KW-0853">WD repeat</keyword>
<name>DCI2A_DANRE</name>
<sequence>MSDKSELKAELERKKQRLAQIREEKKRKEEERKKKEAELKKDAVPLQDDSDLEKKRREADALLQSMGITSDVSAAPAPMSPTAKSVGSPSEAGSQDSGDGTTGPRTLHWDCDPSTVLLHSELGRGPLKLAMTKMTHVDFPPKEVVSYTKETQTPTMTEQKDEEDEEEETPAAQPEAETEKEKPEEKQVEEALPHELTEEEKLQILHSEEFMDFFDHSTRIVERALSEHVDVFFDYSGRDMEEKEGEMQAGTKLSLNRKFVDDRWSKQRVVTCLDWSPQYPELLVASYNNNEEAPHEPDGVALVWNMKYKKATPEYVFHCQSAVMSAAFAKFHPNLVVGGTYSGQIVLWDNRSNRRTPVQRTPLSAAAHTHPVYCVNVVGTQNAHNLISISTDGKMCSWSLDMLSQPQDSMELVFKQSKSVAVTSMSFPLGDVNNFVVGSEDGSVYTASRHGSRAGISEMFEGHHGPITGIHCHTAAGPVDFSHLFLTASFDWTVKLWSNKNNKPLYSFEDNSDYVYDVMWSPVHPALFACVDGLGRVDLWNLNNDTEVPTASVAVDGSPALNRLRWSQSGREIAVGDSEGQIHIYDVGEQIAVPRNDEWTRFVRTLVEINENRDDAEELAAQRLAA</sequence>
<proteinExistence type="inferred from homology"/>
<comment type="function">
    <text evidence="2 5">Acts as one of several non-catalytic accessory components of the cytoplasmic dynein 1 complex that are thought to be involved in linking dynein to cargos and to adapter proteins that regulate dynein function. Cytoplasmic dynein 1 acts as a motor for the intracellular retrograde motility of vesicles and organelles along microtubules (By similarity). Plays a role in the development of anterior brain and cartilaginous structures (PubMed:31079899).</text>
</comment>
<comment type="subunit">
    <text evidence="2">Homodimer. The cytoplasmic dynein 1 complex consists of two catalytic heavy chains (HCs) and a number of non-catalytic subunits presented by intermediate chains (ICs), light intermediate chains (LICs) and light chains (LCs); the composition seems to vary in respect to the IC, LIC and LC composition. The heavy chain homodimer serves as a scaffold for the probable homodimeric assembly of the respective non-catalytic subunits. The ICs and LICs bind directly to the HC dimer and the LCs assemble on the IC dimer.</text>
</comment>
<comment type="subcellular location">
    <subcellularLocation>
        <location evidence="1">Cytoplasm</location>
        <location evidence="1">Cytoskeleton</location>
    </subcellularLocation>
    <subcellularLocation>
        <location evidence="1">Cytoplasm</location>
    </subcellularLocation>
</comment>
<comment type="disruption phenotype">
    <text evidence="5">Morphant embryos display defective craniofacial patterning, microcephaly, a marked disorganization of axonal patterning in the head, reduced number of axon tracts crossing the dorsal midline, and increased cell death.</text>
</comment>
<comment type="similarity">
    <text evidence="6">Belongs to the dynein intermediate chain family.</text>
</comment>
<accession>E7F6H7</accession>
<gene>
    <name type="primary">dync1i2a</name>
</gene>
<reference key="1">
    <citation type="journal article" date="2013" name="Nature">
        <title>The zebrafish reference genome sequence and its relationship to the human genome.</title>
        <authorList>
            <person name="Howe K."/>
            <person name="Clark M.D."/>
            <person name="Torroja C.F."/>
            <person name="Torrance J."/>
            <person name="Berthelot C."/>
            <person name="Muffato M."/>
            <person name="Collins J.E."/>
            <person name="Humphray S."/>
            <person name="McLaren K."/>
            <person name="Matthews L."/>
            <person name="McLaren S."/>
            <person name="Sealy I."/>
            <person name="Caccamo M."/>
            <person name="Churcher C."/>
            <person name="Scott C."/>
            <person name="Barrett J.C."/>
            <person name="Koch R."/>
            <person name="Rauch G.J."/>
            <person name="White S."/>
            <person name="Chow W."/>
            <person name="Kilian B."/>
            <person name="Quintais L.T."/>
            <person name="Guerra-Assuncao J.A."/>
            <person name="Zhou Y."/>
            <person name="Gu Y."/>
            <person name="Yen J."/>
            <person name="Vogel J.H."/>
            <person name="Eyre T."/>
            <person name="Redmond S."/>
            <person name="Banerjee R."/>
            <person name="Chi J."/>
            <person name="Fu B."/>
            <person name="Langley E."/>
            <person name="Maguire S.F."/>
            <person name="Laird G.K."/>
            <person name="Lloyd D."/>
            <person name="Kenyon E."/>
            <person name="Donaldson S."/>
            <person name="Sehra H."/>
            <person name="Almeida-King J."/>
            <person name="Loveland J."/>
            <person name="Trevanion S."/>
            <person name="Jones M."/>
            <person name="Quail M."/>
            <person name="Willey D."/>
            <person name="Hunt A."/>
            <person name="Burton J."/>
            <person name="Sims S."/>
            <person name="McLay K."/>
            <person name="Plumb B."/>
            <person name="Davis J."/>
            <person name="Clee C."/>
            <person name="Oliver K."/>
            <person name="Clark R."/>
            <person name="Riddle C."/>
            <person name="Elliot D."/>
            <person name="Threadgold G."/>
            <person name="Harden G."/>
            <person name="Ware D."/>
            <person name="Begum S."/>
            <person name="Mortimore B."/>
            <person name="Kerry G."/>
            <person name="Heath P."/>
            <person name="Phillimore B."/>
            <person name="Tracey A."/>
            <person name="Corby N."/>
            <person name="Dunn M."/>
            <person name="Johnson C."/>
            <person name="Wood J."/>
            <person name="Clark S."/>
            <person name="Pelan S."/>
            <person name="Griffiths G."/>
            <person name="Smith M."/>
            <person name="Glithero R."/>
            <person name="Howden P."/>
            <person name="Barker N."/>
            <person name="Lloyd C."/>
            <person name="Stevens C."/>
            <person name="Harley J."/>
            <person name="Holt K."/>
            <person name="Panagiotidis G."/>
            <person name="Lovell J."/>
            <person name="Beasley H."/>
            <person name="Henderson C."/>
            <person name="Gordon D."/>
            <person name="Auger K."/>
            <person name="Wright D."/>
            <person name="Collins J."/>
            <person name="Raisen C."/>
            <person name="Dyer L."/>
            <person name="Leung K."/>
            <person name="Robertson L."/>
            <person name="Ambridge K."/>
            <person name="Leongamornlert D."/>
            <person name="McGuire S."/>
            <person name="Gilderthorp R."/>
            <person name="Griffiths C."/>
            <person name="Manthravadi D."/>
            <person name="Nichol S."/>
            <person name="Barker G."/>
            <person name="Whitehead S."/>
            <person name="Kay M."/>
            <person name="Brown J."/>
            <person name="Murnane C."/>
            <person name="Gray E."/>
            <person name="Humphries M."/>
            <person name="Sycamore N."/>
            <person name="Barker D."/>
            <person name="Saunders D."/>
            <person name="Wallis J."/>
            <person name="Babbage A."/>
            <person name="Hammond S."/>
            <person name="Mashreghi-Mohammadi M."/>
            <person name="Barr L."/>
            <person name="Martin S."/>
            <person name="Wray P."/>
            <person name="Ellington A."/>
            <person name="Matthews N."/>
            <person name="Ellwood M."/>
            <person name="Woodmansey R."/>
            <person name="Clark G."/>
            <person name="Cooper J."/>
            <person name="Tromans A."/>
            <person name="Grafham D."/>
            <person name="Skuce C."/>
            <person name="Pandian R."/>
            <person name="Andrews R."/>
            <person name="Harrison E."/>
            <person name="Kimberley A."/>
            <person name="Garnett J."/>
            <person name="Fosker N."/>
            <person name="Hall R."/>
            <person name="Garner P."/>
            <person name="Kelly D."/>
            <person name="Bird C."/>
            <person name="Palmer S."/>
            <person name="Gehring I."/>
            <person name="Berger A."/>
            <person name="Dooley C.M."/>
            <person name="Ersan-Urun Z."/>
            <person name="Eser C."/>
            <person name="Geiger H."/>
            <person name="Geisler M."/>
            <person name="Karotki L."/>
            <person name="Kirn A."/>
            <person name="Konantz J."/>
            <person name="Konantz M."/>
            <person name="Oberlander M."/>
            <person name="Rudolph-Geiger S."/>
            <person name="Teucke M."/>
            <person name="Lanz C."/>
            <person name="Raddatz G."/>
            <person name="Osoegawa K."/>
            <person name="Zhu B."/>
            <person name="Rapp A."/>
            <person name="Widaa S."/>
            <person name="Langford C."/>
            <person name="Yang F."/>
            <person name="Schuster S.C."/>
            <person name="Carter N.P."/>
            <person name="Harrow J."/>
            <person name="Ning Z."/>
            <person name="Herrero J."/>
            <person name="Searle S.M."/>
            <person name="Enright A."/>
            <person name="Geisler R."/>
            <person name="Plasterk R.H."/>
            <person name="Lee C."/>
            <person name="Westerfield M."/>
            <person name="de Jong P.J."/>
            <person name="Zon L.I."/>
            <person name="Postlethwait J.H."/>
            <person name="Nusslein-Volhard C."/>
            <person name="Hubbard T.J."/>
            <person name="Roest Crollius H."/>
            <person name="Rogers J."/>
            <person name="Stemple D.L."/>
        </authorList>
    </citation>
    <scope>NUCLEOTIDE SEQUENCE [LARGE SCALE GENOMIC DNA]</scope>
    <source>
        <strain>Tuebingen</strain>
    </source>
</reference>
<reference key="2">
    <citation type="journal article" date="2019" name="Am. J. Hum. Genet.">
        <title>Bi-allelic variants in DYNC1I2 cause syndromic microcephaly with intellectual disability, cerebral malformations, and dysmorphic facial features.</title>
        <authorList>
            <person name="Ansar M."/>
            <person name="Ullah F."/>
            <person name="Paracha S.A."/>
            <person name="Adams D.J."/>
            <person name="Lai A."/>
            <person name="Pais L."/>
            <person name="Iwaszkiewicz J."/>
            <person name="Millan F."/>
            <person name="Sarwar M.T."/>
            <person name="Agha Z."/>
            <person name="Shah S.F."/>
            <person name="Qaisar A.A."/>
            <person name="Falconnet E."/>
            <person name="Zoete V."/>
            <person name="Ranza E."/>
            <person name="Makrythanasis P."/>
            <person name="Santoni F.A."/>
            <person name="Ahmed J."/>
            <person name="Katsanis N."/>
            <person name="Walsh C."/>
            <person name="Davis E.E."/>
            <person name="Antonarakis S.E."/>
        </authorList>
    </citation>
    <scope>FUNCTION</scope>
    <scope>DISRUPTION PHENOTYPE</scope>
</reference>
<dbReference type="EMBL" id="CU222541">
    <property type="status" value="NOT_ANNOTATED_CDS"/>
    <property type="molecule type" value="Genomic_DNA"/>
</dbReference>
<dbReference type="EMBL" id="CU929261">
    <property type="status" value="NOT_ANNOTATED_CDS"/>
    <property type="molecule type" value="Genomic_DNA"/>
</dbReference>
<dbReference type="EMBL" id="FP245477">
    <property type="status" value="NOT_ANNOTATED_CDS"/>
    <property type="molecule type" value="Genomic_DNA"/>
</dbReference>
<dbReference type="EMBL" id="FQ377636">
    <property type="status" value="NOT_ANNOTATED_CDS"/>
    <property type="molecule type" value="Genomic_DNA"/>
</dbReference>
<dbReference type="RefSeq" id="XP_017213212.2">
    <property type="nucleotide sequence ID" value="XM_017357723.3"/>
</dbReference>
<dbReference type="SMR" id="E7F6H7"/>
<dbReference type="FunCoup" id="E7F6H7">
    <property type="interactions" value="2496"/>
</dbReference>
<dbReference type="STRING" id="7955.ENSDARP00000009095"/>
<dbReference type="PaxDb" id="7955-ENSDARP00000123958"/>
<dbReference type="PeptideAtlas" id="E7F6H7"/>
<dbReference type="Ensembl" id="ENSDART00000007756">
    <property type="protein sequence ID" value="ENSDARP00000009095"/>
    <property type="gene ID" value="ENSDARG00000078386"/>
</dbReference>
<dbReference type="GeneID" id="767729"/>
<dbReference type="HOGENOM" id="CLU_012999_1_1_1"/>
<dbReference type="InParanoid" id="E7F6H7"/>
<dbReference type="OMA" id="NCCKFER"/>
<dbReference type="OrthoDB" id="4189at2759"/>
<dbReference type="TreeFam" id="TF300553"/>
<dbReference type="Reactome" id="R-DRE-9646399">
    <property type="pathway name" value="Aggrephagy"/>
</dbReference>
<dbReference type="Proteomes" id="UP000000437">
    <property type="component" value="Chromosome 9"/>
</dbReference>
<dbReference type="Bgee" id="ENSDARG00000078386">
    <property type="expression patterns" value="Expressed in intestine and 23 other cell types or tissues"/>
</dbReference>
<dbReference type="ExpressionAtlas" id="E7F6H7">
    <property type="expression patterns" value="baseline"/>
</dbReference>
<dbReference type="GO" id="GO:0005737">
    <property type="term" value="C:cytoplasm"/>
    <property type="evidence" value="ECO:0007669"/>
    <property type="project" value="UniProtKB-SubCell"/>
</dbReference>
<dbReference type="GO" id="GO:0005868">
    <property type="term" value="C:cytoplasmic dynein complex"/>
    <property type="evidence" value="ECO:0007669"/>
    <property type="project" value="InterPro"/>
</dbReference>
<dbReference type="GO" id="GO:0007018">
    <property type="term" value="P:microtubule-based movement"/>
    <property type="evidence" value="ECO:0007669"/>
    <property type="project" value="InterPro"/>
</dbReference>
<dbReference type="FunFam" id="2.130.10.10:FF:000026">
    <property type="entry name" value="cytoplasmic dynein 1 intermediate chain 2 isoform X2"/>
    <property type="match status" value="1"/>
</dbReference>
<dbReference type="FunFam" id="2.130.10.10:FF:001637">
    <property type="entry name" value="Dynein, cytoplasmic 1, intermediate chain 2a"/>
    <property type="match status" value="1"/>
</dbReference>
<dbReference type="Gene3D" id="2.130.10.10">
    <property type="entry name" value="YVTN repeat-like/Quinoprotein amine dehydrogenase"/>
    <property type="match status" value="2"/>
</dbReference>
<dbReference type="InterPro" id="IPR025956">
    <property type="entry name" value="DYNC1I1/DYNC1I2"/>
</dbReference>
<dbReference type="InterPro" id="IPR050687">
    <property type="entry name" value="Dynein_IC"/>
</dbReference>
<dbReference type="InterPro" id="IPR015943">
    <property type="entry name" value="WD40/YVTN_repeat-like_dom_sf"/>
</dbReference>
<dbReference type="InterPro" id="IPR036322">
    <property type="entry name" value="WD40_repeat_dom_sf"/>
</dbReference>
<dbReference type="InterPro" id="IPR001680">
    <property type="entry name" value="WD40_rpt"/>
</dbReference>
<dbReference type="PANTHER" id="PTHR12442:SF37">
    <property type="entry name" value="CYTOPLASMIC DYNEIN 1 INTERMEDIATE CHAIN 2"/>
    <property type="match status" value="1"/>
</dbReference>
<dbReference type="PANTHER" id="PTHR12442">
    <property type="entry name" value="DYNEIN INTERMEDIATE CHAIN"/>
    <property type="match status" value="1"/>
</dbReference>
<dbReference type="Pfam" id="PF11540">
    <property type="entry name" value="Dynein_IC2"/>
    <property type="match status" value="1"/>
</dbReference>
<dbReference type="Pfam" id="PF00400">
    <property type="entry name" value="WD40"/>
    <property type="match status" value="1"/>
</dbReference>
<dbReference type="SMART" id="SM00320">
    <property type="entry name" value="WD40"/>
    <property type="match status" value="7"/>
</dbReference>
<dbReference type="SUPFAM" id="SSF50978">
    <property type="entry name" value="WD40 repeat-like"/>
    <property type="match status" value="1"/>
</dbReference>
<dbReference type="PROSITE" id="PS50294">
    <property type="entry name" value="WD_REPEATS_REGION"/>
    <property type="match status" value="1"/>
</dbReference>
<organism>
    <name type="scientific">Danio rerio</name>
    <name type="common">Zebrafish</name>
    <name type="synonym">Brachydanio rerio</name>
    <dbReference type="NCBI Taxonomy" id="7955"/>
    <lineage>
        <taxon>Eukaryota</taxon>
        <taxon>Metazoa</taxon>
        <taxon>Chordata</taxon>
        <taxon>Craniata</taxon>
        <taxon>Vertebrata</taxon>
        <taxon>Euteleostomi</taxon>
        <taxon>Actinopterygii</taxon>
        <taxon>Neopterygii</taxon>
        <taxon>Teleostei</taxon>
        <taxon>Ostariophysi</taxon>
        <taxon>Cypriniformes</taxon>
        <taxon>Danionidae</taxon>
        <taxon>Danioninae</taxon>
        <taxon>Danio</taxon>
    </lineage>
</organism>